<proteinExistence type="evidence at protein level"/>
<accession>Q9T0G7</accession>
<comment type="function">
    <text evidence="7 8 10">Histone methyltransferase family member that plays a role in gene silencing (PubMed:19043555, PubMed:24463519, PubMed:27171427). Together with MORC6 and SUVH2, regulates the silencing of some transposable elements (TEs) (PubMed:27171427). According to PubMed:19043555, the protein does not bind S-adenosyl-L-methionine and lacks methyltransferase activity. Instead, it may function downstream of DRM2 in RNA-directed DNA methylation, binding to methylated DNA and recruiting DNA-directed RNA polymerase V to chromatin (PubMed:24463519, PubMed:27171427).</text>
</comment>
<comment type="subunit">
    <text evidence="9 10">Component of an RNA-directed DNA methylation (RdDM) complex that contains at least MORC6, MORC1/CRT1, MORC2, SWI3D and SUVH9. Interacts directly with MORC6, MORC2 and MORC1/CRT1. Interacts with SWI3B, SWI3C and SWI3D (PubMed:27171427).</text>
</comment>
<comment type="subcellular location">
    <subcellularLocation>
        <location evidence="12">Nucleus</location>
    </subcellularLocation>
    <subcellularLocation>
        <location evidence="1">Chromosome</location>
        <location evidence="1">Centromere</location>
    </subcellularLocation>
    <text evidence="11">Associates with centromeric constitutive heterochromatin.</text>
</comment>
<comment type="domain">
    <text>Although both SET and pre-SET domains are present, the absence of the post-SET domain may explain the lack of methyltransferase activity. Besides, the Cys residues in the SET domain that normally bind a zinc ion are not conserved.</text>
</comment>
<comment type="domain">
    <text>In the pre-SET domain, Cys residues bind 3 zinc ions that are arranged in a triangular cluster; some of these Cys residues contribute to the binding of two zinc ions within the cluster.</text>
</comment>
<comment type="disruption phenotype">
    <text evidence="10">Impaired gene silencing due to decondensation of chromocenters leading to the derepression of DNA-methylated genes and transposable elements (TEs).</text>
</comment>
<comment type="similarity">
    <text evidence="5">Belongs to the class V-like SAM-binding methyltransferase superfamily. Histone-lysine methyltransferase family. Suvar3-9 subfamily.</text>
</comment>
<name>SUVH9_ARATH</name>
<dbReference type="EMBL" id="AF344452">
    <property type="protein sequence ID" value="AAK28974.1"/>
    <property type="molecule type" value="mRNA"/>
</dbReference>
<dbReference type="EMBL" id="AL049656">
    <property type="protein sequence ID" value="CAB41104.1"/>
    <property type="molecule type" value="Genomic_DNA"/>
</dbReference>
<dbReference type="EMBL" id="AL161536">
    <property type="protein sequence ID" value="CAB78388.1"/>
    <property type="molecule type" value="Genomic_DNA"/>
</dbReference>
<dbReference type="EMBL" id="CP002687">
    <property type="protein sequence ID" value="AEE83282.1"/>
    <property type="molecule type" value="Genomic_DNA"/>
</dbReference>
<dbReference type="EMBL" id="CP002687">
    <property type="protein sequence ID" value="AEE83283.1"/>
    <property type="molecule type" value="Genomic_DNA"/>
</dbReference>
<dbReference type="PIR" id="T06648">
    <property type="entry name" value="T06648"/>
</dbReference>
<dbReference type="RefSeq" id="NP_001031625.1">
    <property type="nucleotide sequence ID" value="NM_001036548.2"/>
</dbReference>
<dbReference type="RefSeq" id="NP_193082.1">
    <property type="nucleotide sequence ID" value="NM_117420.3"/>
</dbReference>
<dbReference type="PDB" id="4NJ5">
    <property type="method" value="X-ray"/>
    <property type="resolution" value="2.40 A"/>
    <property type="chains" value="A=134-650"/>
</dbReference>
<dbReference type="PDBsum" id="4NJ5"/>
<dbReference type="SMR" id="Q9T0G7"/>
<dbReference type="BioGRID" id="12275">
    <property type="interactions" value="1"/>
</dbReference>
<dbReference type="FunCoup" id="Q9T0G7">
    <property type="interactions" value="164"/>
</dbReference>
<dbReference type="IntAct" id="Q9T0G7">
    <property type="interactions" value="1"/>
</dbReference>
<dbReference type="STRING" id="3702.Q9T0G7"/>
<dbReference type="PaxDb" id="3702-AT4G13460.2"/>
<dbReference type="ProteomicsDB" id="226525"/>
<dbReference type="EnsemblPlants" id="AT4G13460.1">
    <property type="protein sequence ID" value="AT4G13460.1"/>
    <property type="gene ID" value="AT4G13460"/>
</dbReference>
<dbReference type="EnsemblPlants" id="AT4G13460.2">
    <property type="protein sequence ID" value="AT4G13460.2"/>
    <property type="gene ID" value="AT4G13460"/>
</dbReference>
<dbReference type="GeneID" id="826978"/>
<dbReference type="Gramene" id="AT4G13460.1">
    <property type="protein sequence ID" value="AT4G13460.1"/>
    <property type="gene ID" value="AT4G13460"/>
</dbReference>
<dbReference type="Gramene" id="AT4G13460.2">
    <property type="protein sequence ID" value="AT4G13460.2"/>
    <property type="gene ID" value="AT4G13460"/>
</dbReference>
<dbReference type="KEGG" id="ath:AT4G13460"/>
<dbReference type="Araport" id="AT4G13460"/>
<dbReference type="TAIR" id="AT4G13460">
    <property type="gene designation" value="SUVH9"/>
</dbReference>
<dbReference type="eggNOG" id="KOG1082">
    <property type="taxonomic scope" value="Eukaryota"/>
</dbReference>
<dbReference type="HOGENOM" id="CLU_004556_4_0_1"/>
<dbReference type="InParanoid" id="Q9T0G7"/>
<dbReference type="OMA" id="IGCYCAQ"/>
<dbReference type="PhylomeDB" id="Q9T0G7"/>
<dbReference type="EvolutionaryTrace" id="Q9T0G7"/>
<dbReference type="PRO" id="PR:Q9T0G7"/>
<dbReference type="Proteomes" id="UP000006548">
    <property type="component" value="Chromosome 4"/>
</dbReference>
<dbReference type="ExpressionAtlas" id="Q9T0G7">
    <property type="expression patterns" value="baseline and differential"/>
</dbReference>
<dbReference type="GO" id="GO:0000775">
    <property type="term" value="C:chromosome, centromeric region"/>
    <property type="evidence" value="ECO:0007669"/>
    <property type="project" value="UniProtKB-SubCell"/>
</dbReference>
<dbReference type="GO" id="GO:0005634">
    <property type="term" value="C:nucleus"/>
    <property type="evidence" value="ECO:0007669"/>
    <property type="project" value="UniProtKB-SubCell"/>
</dbReference>
<dbReference type="GO" id="GO:0003677">
    <property type="term" value="F:DNA binding"/>
    <property type="evidence" value="ECO:0007669"/>
    <property type="project" value="UniProtKB-KW"/>
</dbReference>
<dbReference type="GO" id="GO:0042054">
    <property type="term" value="F:histone methyltransferase activity"/>
    <property type="evidence" value="ECO:0007669"/>
    <property type="project" value="InterPro"/>
</dbReference>
<dbReference type="GO" id="GO:0008270">
    <property type="term" value="F:zinc ion binding"/>
    <property type="evidence" value="ECO:0007669"/>
    <property type="project" value="InterPro"/>
</dbReference>
<dbReference type="GO" id="GO:0009294">
    <property type="term" value="P:DNA-mediated transformation"/>
    <property type="evidence" value="ECO:0000315"/>
    <property type="project" value="TAIR"/>
</dbReference>
<dbReference type="GO" id="GO:0080188">
    <property type="term" value="P:gene silencing by siRNA-directed DNA methylation"/>
    <property type="evidence" value="ECO:0000315"/>
    <property type="project" value="UniProtKB"/>
</dbReference>
<dbReference type="CDD" id="cd10545">
    <property type="entry name" value="SET_AtSUVH-like"/>
    <property type="match status" value="1"/>
</dbReference>
<dbReference type="FunFam" id="2.170.270.10:FF:000085">
    <property type="entry name" value="Histone-lysine N-methyltransferase family member SUVH9"/>
    <property type="match status" value="1"/>
</dbReference>
<dbReference type="FunFam" id="2.30.280.10:FF:000003">
    <property type="entry name" value="Histone-lysine N-methyltransferase, H3 lysine-9 specific SUVH5"/>
    <property type="match status" value="1"/>
</dbReference>
<dbReference type="Gene3D" id="2.170.270.10">
    <property type="entry name" value="SET domain"/>
    <property type="match status" value="1"/>
</dbReference>
<dbReference type="Gene3D" id="2.30.280.10">
    <property type="entry name" value="SRA-YDG"/>
    <property type="match status" value="1"/>
</dbReference>
<dbReference type="InterPro" id="IPR025794">
    <property type="entry name" value="H3-K9-MeTrfase_plant"/>
</dbReference>
<dbReference type="InterPro" id="IPR051357">
    <property type="entry name" value="H3K9_HMTase_SUVAR3-9"/>
</dbReference>
<dbReference type="InterPro" id="IPR007728">
    <property type="entry name" value="Pre-SET_dom"/>
</dbReference>
<dbReference type="InterPro" id="IPR015947">
    <property type="entry name" value="PUA-like_sf"/>
</dbReference>
<dbReference type="InterPro" id="IPR001214">
    <property type="entry name" value="SET_dom"/>
</dbReference>
<dbReference type="InterPro" id="IPR046341">
    <property type="entry name" value="SET_dom_sf"/>
</dbReference>
<dbReference type="InterPro" id="IPR036987">
    <property type="entry name" value="SRA-YDG_sf"/>
</dbReference>
<dbReference type="InterPro" id="IPR003105">
    <property type="entry name" value="SRA_YDG"/>
</dbReference>
<dbReference type="PANTHER" id="PTHR45660:SF3">
    <property type="entry name" value="HISTONE-LYSINE N-METHYLTRANSFERASE FAMILY MEMBER SUVH9"/>
    <property type="match status" value="1"/>
</dbReference>
<dbReference type="PANTHER" id="PTHR45660">
    <property type="entry name" value="HISTONE-LYSINE N-METHYLTRANSFERASE SETMAR"/>
    <property type="match status" value="1"/>
</dbReference>
<dbReference type="Pfam" id="PF05033">
    <property type="entry name" value="Pre-SET"/>
    <property type="match status" value="1"/>
</dbReference>
<dbReference type="Pfam" id="PF02182">
    <property type="entry name" value="SAD_SRA"/>
    <property type="match status" value="1"/>
</dbReference>
<dbReference type="Pfam" id="PF00856">
    <property type="entry name" value="SET"/>
    <property type="match status" value="1"/>
</dbReference>
<dbReference type="SMART" id="SM00468">
    <property type="entry name" value="PreSET"/>
    <property type="match status" value="1"/>
</dbReference>
<dbReference type="SMART" id="SM00317">
    <property type="entry name" value="SET"/>
    <property type="match status" value="1"/>
</dbReference>
<dbReference type="SMART" id="SM00466">
    <property type="entry name" value="SRA"/>
    <property type="match status" value="1"/>
</dbReference>
<dbReference type="SUPFAM" id="SSF88697">
    <property type="entry name" value="PUA domain-like"/>
    <property type="match status" value="1"/>
</dbReference>
<dbReference type="SUPFAM" id="SSF82199">
    <property type="entry name" value="SET domain"/>
    <property type="match status" value="1"/>
</dbReference>
<dbReference type="PROSITE" id="PS50867">
    <property type="entry name" value="PRE_SET"/>
    <property type="match status" value="1"/>
</dbReference>
<dbReference type="PROSITE" id="PS51575">
    <property type="entry name" value="SAM_MT43_SUVAR39_2"/>
    <property type="match status" value="1"/>
</dbReference>
<dbReference type="PROSITE" id="PS50280">
    <property type="entry name" value="SET"/>
    <property type="match status" value="1"/>
</dbReference>
<dbReference type="PROSITE" id="PS51015">
    <property type="entry name" value="YDG"/>
    <property type="match status" value="1"/>
</dbReference>
<sequence length="650" mass="72174">MGSSHIPLDPSLNPSPSLIPKLEPVTESTQNLAFQLPNTNPQALISSAVSDFNEATDFSSDYNTVAESARSAFAQRLQRHDDVAVLDSLTGAIVPVEENPEPEPNPYSTSDSSPSVATQRPRPQPRSSELVRITDVGPESERQFREHVRKTRMIYDSLRMFLMMEEAKRNGVGGRRARADGKAGKAGSMMRDCMLWMNRDKRIVGSIPGVQVGDIFFFRFELCVMGLHGHPQSGIDFLTGSLSSNGEPIATSVIVSGGYEDDDDQGDVIMYTGQGGQDRLGRQAEHQRLEGGNLAMERSMYYGIEVRVIRGLKYENEVSSRVYVYDGLFRIVDSWFDVGKSGFGVFKYRLERIEGQAEMGSSVLKFARTLKTNPLSVRPRGYINFDISNGKENVPVYLFNDIDSDQEPLYYEYLAQTSFPPGLFVQQSGNASGCDCVNGCGSGCLCEAKNSGEIAYDYNGTLIRQKPLIHECGSACQCPPSCRNRVTQKGLRNRLEVFRSLETGWGVRSLDVLHAGAFICEYAGVALTREQANILTMNGDTLVYPARFSSARWEDWGDLSQVLADFERPSYPDIPPVDFAMDVSKMRNVACYISHSTDPNVIVQFVLHDHNSLMFPRVMLFAAENIPPMTELSLDYGVVDDWNAKLAICN</sequence>
<protein>
    <recommendedName>
        <fullName>Histone-lysine N-methyltransferase family member SUVH9</fullName>
    </recommendedName>
    <alternativeName>
        <fullName>Histone H3-K9 methyltransferase 9</fullName>
        <shortName>H3-K9-HMTase 9</shortName>
    </alternativeName>
    <alternativeName>
        <fullName>Protein SET DOMAIN GROUP 22</fullName>
    </alternativeName>
    <alternativeName>
        <fullName>Suppressor of variegation 3-9 homolog protein 9</fullName>
        <shortName>Su(var)3-9 homolog protein 9</shortName>
    </alternativeName>
</protein>
<feature type="chain" id="PRO_0000186080" description="Histone-lysine N-methyltransferase family member SUVH9">
    <location>
        <begin position="1"/>
        <end position="650"/>
    </location>
</feature>
<feature type="domain" description="YDG" evidence="4">
    <location>
        <begin position="205"/>
        <end position="352"/>
    </location>
</feature>
<feature type="domain" description="Pre-SET" evidence="2">
    <location>
        <begin position="432"/>
        <end position="490"/>
    </location>
</feature>
<feature type="domain" description="SET" evidence="3">
    <location>
        <begin position="493"/>
        <end position="637"/>
    </location>
</feature>
<feature type="region of interest" description="Disordered" evidence="6">
    <location>
        <begin position="1"/>
        <end position="24"/>
    </location>
</feature>
<feature type="region of interest" description="Disordered" evidence="6">
    <location>
        <begin position="95"/>
        <end position="129"/>
    </location>
</feature>
<feature type="compositionally biased region" description="Low complexity" evidence="6">
    <location>
        <begin position="7"/>
        <end position="20"/>
    </location>
</feature>
<feature type="compositionally biased region" description="Polar residues" evidence="6">
    <location>
        <begin position="107"/>
        <end position="118"/>
    </location>
</feature>
<feature type="binding site">
    <location>
        <position position="434"/>
    </location>
    <ligand>
        <name>Zn(2+)</name>
        <dbReference type="ChEBI" id="CHEBI:29105"/>
        <label>1</label>
    </ligand>
</feature>
<feature type="binding site">
    <location>
        <position position="434"/>
    </location>
    <ligand>
        <name>Zn(2+)</name>
        <dbReference type="ChEBI" id="CHEBI:29105"/>
        <label>2</label>
    </ligand>
</feature>
<feature type="binding site">
    <location>
        <position position="436"/>
    </location>
    <ligand>
        <name>Zn(2+)</name>
        <dbReference type="ChEBI" id="CHEBI:29105"/>
        <label>1</label>
    </ligand>
</feature>
<feature type="binding site">
    <location>
        <position position="440"/>
    </location>
    <ligand>
        <name>Zn(2+)</name>
        <dbReference type="ChEBI" id="CHEBI:29105"/>
        <label>1</label>
    </ligand>
</feature>
<feature type="binding site">
    <location>
        <position position="440"/>
    </location>
    <ligand>
        <name>Zn(2+)</name>
        <dbReference type="ChEBI" id="CHEBI:29105"/>
        <label>3</label>
    </ligand>
</feature>
<feature type="binding site">
    <location>
        <position position="444"/>
    </location>
    <ligand>
        <name>Zn(2+)</name>
        <dbReference type="ChEBI" id="CHEBI:29105"/>
        <label>1</label>
    </ligand>
</feature>
<feature type="binding site">
    <location>
        <position position="446"/>
    </location>
    <ligand>
        <name>Zn(2+)</name>
        <dbReference type="ChEBI" id="CHEBI:29105"/>
        <label>2</label>
    </ligand>
</feature>
<feature type="binding site">
    <location>
        <position position="472"/>
    </location>
    <ligand>
        <name>Zn(2+)</name>
        <dbReference type="ChEBI" id="CHEBI:29105"/>
        <label>2</label>
    </ligand>
</feature>
<feature type="binding site">
    <location>
        <position position="472"/>
    </location>
    <ligand>
        <name>Zn(2+)</name>
        <dbReference type="ChEBI" id="CHEBI:29105"/>
        <label>3</label>
    </ligand>
</feature>
<feature type="binding site">
    <location>
        <position position="476"/>
    </location>
    <ligand>
        <name>Zn(2+)</name>
        <dbReference type="ChEBI" id="CHEBI:29105"/>
        <label>2</label>
    </ligand>
</feature>
<feature type="binding site">
    <location>
        <position position="478"/>
    </location>
    <ligand>
        <name>Zn(2+)</name>
        <dbReference type="ChEBI" id="CHEBI:29105"/>
        <label>3</label>
    </ligand>
</feature>
<feature type="binding site">
    <location>
        <position position="482"/>
    </location>
    <ligand>
        <name>Zn(2+)</name>
        <dbReference type="ChEBI" id="CHEBI:29105"/>
        <label>3</label>
    </ligand>
</feature>
<feature type="helix" evidence="13">
    <location>
        <begin position="140"/>
        <end position="167"/>
    </location>
</feature>
<feature type="helix" evidence="13">
    <location>
        <begin position="178"/>
        <end position="192"/>
    </location>
</feature>
<feature type="strand" evidence="13">
    <location>
        <begin position="215"/>
        <end position="217"/>
    </location>
</feature>
<feature type="helix" evidence="13">
    <location>
        <begin position="219"/>
        <end position="224"/>
    </location>
</feature>
<feature type="strand" evidence="13">
    <location>
        <begin position="234"/>
        <end position="238"/>
    </location>
</feature>
<feature type="strand" evidence="13">
    <location>
        <begin position="242"/>
        <end position="246"/>
    </location>
</feature>
<feature type="strand" evidence="13">
    <location>
        <begin position="249"/>
        <end position="256"/>
    </location>
</feature>
<feature type="strand" evidence="13">
    <location>
        <begin position="268"/>
        <end position="272"/>
    </location>
</feature>
<feature type="helix" evidence="13">
    <location>
        <begin position="291"/>
        <end position="301"/>
    </location>
</feature>
<feature type="strand" evidence="13">
    <location>
        <begin position="306"/>
        <end position="312"/>
    </location>
</feature>
<feature type="strand" evidence="13">
    <location>
        <begin position="322"/>
        <end position="338"/>
    </location>
</feature>
<feature type="strand" evidence="13">
    <location>
        <begin position="344"/>
        <end position="352"/>
    </location>
</feature>
<feature type="helix" evidence="13">
    <location>
        <begin position="360"/>
        <end position="372"/>
    </location>
</feature>
<feature type="helix" evidence="13">
    <location>
        <begin position="374"/>
        <end position="376"/>
    </location>
</feature>
<feature type="strand" evidence="13">
    <location>
        <begin position="382"/>
        <end position="385"/>
    </location>
</feature>
<feature type="strand" evidence="13">
    <location>
        <begin position="391"/>
        <end position="394"/>
    </location>
</feature>
<feature type="strand" evidence="13">
    <location>
        <begin position="396"/>
        <end position="399"/>
    </location>
</feature>
<feature type="helix" evidence="13">
    <location>
        <begin position="407"/>
        <end position="410"/>
    </location>
</feature>
<feature type="strand" evidence="13">
    <location>
        <begin position="411"/>
        <end position="413"/>
    </location>
</feature>
<feature type="helix" evidence="13">
    <location>
        <begin position="445"/>
        <end position="449"/>
    </location>
</feature>
<feature type="turn" evidence="13">
    <location>
        <begin position="450"/>
        <end position="452"/>
    </location>
</feature>
<feature type="helix" evidence="13">
    <location>
        <begin position="487"/>
        <end position="489"/>
    </location>
</feature>
<feature type="strand" evidence="13">
    <location>
        <begin position="495"/>
        <end position="499"/>
    </location>
</feature>
<feature type="strand" evidence="13">
    <location>
        <begin position="501"/>
        <end position="511"/>
    </location>
</feature>
<feature type="strand" evidence="13">
    <location>
        <begin position="518"/>
        <end position="521"/>
    </location>
</feature>
<feature type="strand" evidence="13">
    <location>
        <begin position="525"/>
        <end position="527"/>
    </location>
</feature>
<feature type="helix" evidence="13">
    <location>
        <begin position="529"/>
        <end position="537"/>
    </location>
</feature>
<feature type="helix" evidence="13">
    <location>
        <begin position="545"/>
        <end position="547"/>
    </location>
</feature>
<feature type="helix" evidence="13">
    <location>
        <begin position="551"/>
        <end position="553"/>
    </location>
</feature>
<feature type="turn" evidence="13">
    <location>
        <begin position="554"/>
        <end position="557"/>
    </location>
</feature>
<feature type="turn" evidence="13">
    <location>
        <begin position="560"/>
        <end position="562"/>
    </location>
</feature>
<feature type="strand" evidence="13">
    <location>
        <begin position="580"/>
        <end position="582"/>
    </location>
</feature>
<feature type="strand" evidence="13">
    <location>
        <begin position="584"/>
        <end position="587"/>
    </location>
</feature>
<feature type="helix" evidence="13">
    <location>
        <begin position="589"/>
        <end position="592"/>
    </location>
</feature>
<feature type="strand" evidence="13">
    <location>
        <begin position="600"/>
        <end position="609"/>
    </location>
</feature>
<feature type="strand" evidence="13">
    <location>
        <begin position="617"/>
        <end position="624"/>
    </location>
</feature>
<feature type="strand" evidence="13">
    <location>
        <begin position="633"/>
        <end position="635"/>
    </location>
</feature>
<gene>
    <name type="primary">SUVH9</name>
    <name type="synonym">SDG22</name>
    <name type="synonym">SET22</name>
    <name type="ordered locus">At4g13460</name>
    <name type="ORF">T6G15.10</name>
</gene>
<evidence type="ECO:0000250" key="1"/>
<evidence type="ECO:0000255" key="2">
    <source>
        <dbReference type="PROSITE-ProRule" id="PRU00157"/>
    </source>
</evidence>
<evidence type="ECO:0000255" key="3">
    <source>
        <dbReference type="PROSITE-ProRule" id="PRU00190"/>
    </source>
</evidence>
<evidence type="ECO:0000255" key="4">
    <source>
        <dbReference type="PROSITE-ProRule" id="PRU00358"/>
    </source>
</evidence>
<evidence type="ECO:0000255" key="5">
    <source>
        <dbReference type="PROSITE-ProRule" id="PRU00908"/>
    </source>
</evidence>
<evidence type="ECO:0000256" key="6">
    <source>
        <dbReference type="SAM" id="MobiDB-lite"/>
    </source>
</evidence>
<evidence type="ECO:0000269" key="7">
    <source>
    </source>
</evidence>
<evidence type="ECO:0000269" key="8">
    <source>
    </source>
</evidence>
<evidence type="ECO:0000269" key="9">
    <source>
    </source>
</evidence>
<evidence type="ECO:0000269" key="10">
    <source>
    </source>
</evidence>
<evidence type="ECO:0000305" key="11"/>
<evidence type="ECO:0000305" key="12">
    <source>
    </source>
</evidence>
<evidence type="ECO:0007829" key="13">
    <source>
        <dbReference type="PDB" id="4NJ5"/>
    </source>
</evidence>
<reference key="1">
    <citation type="journal article" date="2001" name="Nucleic Acids Res.">
        <title>The Arabidopsis thaliana genome contains at least 29 active genes encoding SET domain proteins that can be assigned to four evolutionarily conserved classes.</title>
        <authorList>
            <person name="Baumbusch L.O."/>
            <person name="Thorstensen T."/>
            <person name="Krauss V."/>
            <person name="Fischer A."/>
            <person name="Naumann K."/>
            <person name="Assalkhou R."/>
            <person name="Schulz I."/>
            <person name="Reuter G."/>
            <person name="Aalen R.B."/>
        </authorList>
    </citation>
    <scope>NUCLEOTIDE SEQUENCE [MRNA]</scope>
    <scope>NOMENCLATURE</scope>
</reference>
<reference key="2">
    <citation type="journal article" date="1999" name="Nature">
        <title>Sequence and analysis of chromosome 4 of the plant Arabidopsis thaliana.</title>
        <authorList>
            <person name="Mayer K.F.X."/>
            <person name="Schueller C."/>
            <person name="Wambutt R."/>
            <person name="Murphy G."/>
            <person name="Volckaert G."/>
            <person name="Pohl T."/>
            <person name="Duesterhoeft A."/>
            <person name="Stiekema W."/>
            <person name="Entian K.-D."/>
            <person name="Terryn N."/>
            <person name="Harris B."/>
            <person name="Ansorge W."/>
            <person name="Brandt P."/>
            <person name="Grivell L.A."/>
            <person name="Rieger M."/>
            <person name="Weichselgartner M."/>
            <person name="de Simone V."/>
            <person name="Obermaier B."/>
            <person name="Mache R."/>
            <person name="Mueller M."/>
            <person name="Kreis M."/>
            <person name="Delseny M."/>
            <person name="Puigdomenech P."/>
            <person name="Watson M."/>
            <person name="Schmidtheini T."/>
            <person name="Reichert B."/>
            <person name="Portetelle D."/>
            <person name="Perez-Alonso M."/>
            <person name="Boutry M."/>
            <person name="Bancroft I."/>
            <person name="Vos P."/>
            <person name="Hoheisel J."/>
            <person name="Zimmermann W."/>
            <person name="Wedler H."/>
            <person name="Ridley P."/>
            <person name="Langham S.-A."/>
            <person name="McCullagh B."/>
            <person name="Bilham L."/>
            <person name="Robben J."/>
            <person name="van der Schueren J."/>
            <person name="Grymonprez B."/>
            <person name="Chuang Y.-J."/>
            <person name="Vandenbussche F."/>
            <person name="Braeken M."/>
            <person name="Weltjens I."/>
            <person name="Voet M."/>
            <person name="Bastiaens I."/>
            <person name="Aert R."/>
            <person name="Defoor E."/>
            <person name="Weitzenegger T."/>
            <person name="Bothe G."/>
            <person name="Ramsperger U."/>
            <person name="Hilbert H."/>
            <person name="Braun M."/>
            <person name="Holzer E."/>
            <person name="Brandt A."/>
            <person name="Peters S."/>
            <person name="van Staveren M."/>
            <person name="Dirkse W."/>
            <person name="Mooijman P."/>
            <person name="Klein Lankhorst R."/>
            <person name="Rose M."/>
            <person name="Hauf J."/>
            <person name="Koetter P."/>
            <person name="Berneiser S."/>
            <person name="Hempel S."/>
            <person name="Feldpausch M."/>
            <person name="Lamberth S."/>
            <person name="Van den Daele H."/>
            <person name="De Keyser A."/>
            <person name="Buysshaert C."/>
            <person name="Gielen J."/>
            <person name="Villarroel R."/>
            <person name="De Clercq R."/>
            <person name="van Montagu M."/>
            <person name="Rogers J."/>
            <person name="Cronin A."/>
            <person name="Quail M.A."/>
            <person name="Bray-Allen S."/>
            <person name="Clark L."/>
            <person name="Doggett J."/>
            <person name="Hall S."/>
            <person name="Kay M."/>
            <person name="Lennard N."/>
            <person name="McLay K."/>
            <person name="Mayes R."/>
            <person name="Pettett A."/>
            <person name="Rajandream M.A."/>
            <person name="Lyne M."/>
            <person name="Benes V."/>
            <person name="Rechmann S."/>
            <person name="Borkova D."/>
            <person name="Bloecker H."/>
            <person name="Scharfe M."/>
            <person name="Grimm M."/>
            <person name="Loehnert T.-H."/>
            <person name="Dose S."/>
            <person name="de Haan M."/>
            <person name="Maarse A.C."/>
            <person name="Schaefer M."/>
            <person name="Mueller-Auer S."/>
            <person name="Gabel C."/>
            <person name="Fuchs M."/>
            <person name="Fartmann B."/>
            <person name="Granderath K."/>
            <person name="Dauner D."/>
            <person name="Herzl A."/>
            <person name="Neumann S."/>
            <person name="Argiriou A."/>
            <person name="Vitale D."/>
            <person name="Liguori R."/>
            <person name="Piravandi E."/>
            <person name="Massenet O."/>
            <person name="Quigley F."/>
            <person name="Clabauld G."/>
            <person name="Muendlein A."/>
            <person name="Felber R."/>
            <person name="Schnabl S."/>
            <person name="Hiller R."/>
            <person name="Schmidt W."/>
            <person name="Lecharny A."/>
            <person name="Aubourg S."/>
            <person name="Chefdor F."/>
            <person name="Cooke R."/>
            <person name="Berger C."/>
            <person name="Monfort A."/>
            <person name="Casacuberta E."/>
            <person name="Gibbons T."/>
            <person name="Weber N."/>
            <person name="Vandenbol M."/>
            <person name="Bargues M."/>
            <person name="Terol J."/>
            <person name="Torres A."/>
            <person name="Perez-Perez A."/>
            <person name="Purnelle B."/>
            <person name="Bent E."/>
            <person name="Johnson S."/>
            <person name="Tacon D."/>
            <person name="Jesse T."/>
            <person name="Heijnen L."/>
            <person name="Schwarz S."/>
            <person name="Scholler P."/>
            <person name="Heber S."/>
            <person name="Francs P."/>
            <person name="Bielke C."/>
            <person name="Frishman D."/>
            <person name="Haase D."/>
            <person name="Lemcke K."/>
            <person name="Mewes H.-W."/>
            <person name="Stocker S."/>
            <person name="Zaccaria P."/>
            <person name="Bevan M."/>
            <person name="Wilson R.K."/>
            <person name="de la Bastide M."/>
            <person name="Habermann K."/>
            <person name="Parnell L."/>
            <person name="Dedhia N."/>
            <person name="Gnoj L."/>
            <person name="Schutz K."/>
            <person name="Huang E."/>
            <person name="Spiegel L."/>
            <person name="Sekhon M."/>
            <person name="Murray J."/>
            <person name="Sheet P."/>
            <person name="Cordes M."/>
            <person name="Abu-Threideh J."/>
            <person name="Stoneking T."/>
            <person name="Kalicki J."/>
            <person name="Graves T."/>
            <person name="Harmon G."/>
            <person name="Edwards J."/>
            <person name="Latreille P."/>
            <person name="Courtney L."/>
            <person name="Cloud J."/>
            <person name="Abbott A."/>
            <person name="Scott K."/>
            <person name="Johnson D."/>
            <person name="Minx P."/>
            <person name="Bentley D."/>
            <person name="Fulton B."/>
            <person name="Miller N."/>
            <person name="Greco T."/>
            <person name="Kemp K."/>
            <person name="Kramer J."/>
            <person name="Fulton L."/>
            <person name="Mardis E."/>
            <person name="Dante M."/>
            <person name="Pepin K."/>
            <person name="Hillier L.W."/>
            <person name="Nelson J."/>
            <person name="Spieth J."/>
            <person name="Ryan E."/>
            <person name="Andrews S."/>
            <person name="Geisel C."/>
            <person name="Layman D."/>
            <person name="Du H."/>
            <person name="Ali J."/>
            <person name="Berghoff A."/>
            <person name="Jones K."/>
            <person name="Drone K."/>
            <person name="Cotton M."/>
            <person name="Joshu C."/>
            <person name="Antonoiu B."/>
            <person name="Zidanic M."/>
            <person name="Strong C."/>
            <person name="Sun H."/>
            <person name="Lamar B."/>
            <person name="Yordan C."/>
            <person name="Ma P."/>
            <person name="Zhong J."/>
            <person name="Preston R."/>
            <person name="Vil D."/>
            <person name="Shekher M."/>
            <person name="Matero A."/>
            <person name="Shah R."/>
            <person name="Swaby I.K."/>
            <person name="O'Shaughnessy A."/>
            <person name="Rodriguez M."/>
            <person name="Hoffman J."/>
            <person name="Till S."/>
            <person name="Granat S."/>
            <person name="Shohdy N."/>
            <person name="Hasegawa A."/>
            <person name="Hameed A."/>
            <person name="Lodhi M."/>
            <person name="Johnson A."/>
            <person name="Chen E."/>
            <person name="Marra M.A."/>
            <person name="Martienssen R."/>
            <person name="McCombie W.R."/>
        </authorList>
    </citation>
    <scope>NUCLEOTIDE SEQUENCE [LARGE SCALE GENOMIC DNA]</scope>
    <source>
        <strain>cv. Columbia</strain>
    </source>
</reference>
<reference key="3">
    <citation type="journal article" date="2017" name="Plant J.">
        <title>Araport11: a complete reannotation of the Arabidopsis thaliana reference genome.</title>
        <authorList>
            <person name="Cheng C.Y."/>
            <person name="Krishnakumar V."/>
            <person name="Chan A.P."/>
            <person name="Thibaud-Nissen F."/>
            <person name="Schobel S."/>
            <person name="Town C.D."/>
        </authorList>
    </citation>
    <scope>GENOME REANNOTATION</scope>
    <source>
        <strain>cv. Columbia</strain>
    </source>
</reference>
<reference key="4">
    <citation type="journal article" date="2006" name="J. Plant Physiol.">
        <title>Heterochromatin proteins and the control of heterochromatic gene silencing in Arabidopsis.</title>
        <authorList>
            <person name="Fischer A."/>
            <person name="Hofmann I."/>
            <person name="Naumann K."/>
            <person name="Reuter G."/>
        </authorList>
    </citation>
    <scope>GENE FAMILY</scope>
</reference>
<reference key="5">
    <citation type="journal article" date="2008" name="PLoS Genet.">
        <title>SRA-domain proteins required for DRM2-mediated de novo DNA methylation.</title>
        <authorList>
            <person name="Johnson L.M."/>
            <person name="Law J.A."/>
            <person name="Khattar A."/>
            <person name="Henderson I.R."/>
            <person name="Jacobsen S.E."/>
        </authorList>
    </citation>
    <scope>FUNCTION</scope>
    <scope>DNA-BINDING</scope>
    <scope>LACK OF METHYLTRANSFERASE ACTIVITY</scope>
    <scope>LACK OF S-ADENOSYL-L-METHIONINE BINDING</scope>
</reference>
<reference key="6">
    <citation type="journal article" date="2014" name="PLoS Genet.">
        <title>The SET domain proteins SUVH2 and SUVH9 are required for Pol V occupancy at RNA-directed DNA methylation loci.</title>
        <authorList>
            <person name="Liu Z.-W."/>
            <person name="Shao C.-R."/>
            <person name="Zhang C.-J."/>
            <person name="Zhou J.-X."/>
            <person name="Zhang S.-W."/>
            <person name="Li L."/>
            <person name="Chen S."/>
            <person name="Huang H.-W."/>
            <person name="Cai T."/>
            <person name="He X.-J."/>
        </authorList>
    </citation>
    <scope>SUBUNIT</scope>
    <scope>INTERACTION WITH MORC6; MORC2 AND MORC1/CRT1</scope>
</reference>
<reference key="7">
    <citation type="journal article" date="2016" name="PLoS Genet.">
        <title>Two components of the RNA-Directed DNA methylation pathway associate with MORC6 and silence loci targeted by MORC6 in Arabidopsis.</title>
        <authorList>
            <person name="Liu Z.-W."/>
            <person name="Zhou J.-X."/>
            <person name="Huang H.-W."/>
            <person name="Li Y.-Q."/>
            <person name="Shao C.-R."/>
            <person name="Li L."/>
            <person name="Cai T."/>
            <person name="Chen S."/>
            <person name="He X.-J."/>
        </authorList>
    </citation>
    <scope>FUNCTION</scope>
    <scope>DISRUPTION PHENOTYPE</scope>
    <scope>INTERACTION WITH SWI3B; SWI3C AND SWI3D</scope>
</reference>
<reference key="8">
    <citation type="journal article" date="2014" name="Nature">
        <title>SRA- and SET-domain-containing proteins link RNA polymerase V occupancy to DNA methylation.</title>
        <authorList>
            <person name="Johnson L.M."/>
            <person name="Du J."/>
            <person name="Hale C.J."/>
            <person name="Bischof S."/>
            <person name="Feng S."/>
            <person name="Chodavarapu R.K."/>
            <person name="Zhong X."/>
            <person name="Marson G."/>
            <person name="Pellegrini M."/>
            <person name="Segal D.J."/>
            <person name="Patel D.J."/>
            <person name="Jacobsen S.E."/>
        </authorList>
    </citation>
    <scope>X-RAY CRYSTALLOGRAPHY (2.40 ANGSTROMS) OF 134-650 IN COMPLEX WITH ZINC IONS</scope>
    <scope>SUBCELLULAR LOCATION</scope>
    <scope>FUNCTION</scope>
</reference>
<organism>
    <name type="scientific">Arabidopsis thaliana</name>
    <name type="common">Mouse-ear cress</name>
    <dbReference type="NCBI Taxonomy" id="3702"/>
    <lineage>
        <taxon>Eukaryota</taxon>
        <taxon>Viridiplantae</taxon>
        <taxon>Streptophyta</taxon>
        <taxon>Embryophyta</taxon>
        <taxon>Tracheophyta</taxon>
        <taxon>Spermatophyta</taxon>
        <taxon>Magnoliopsida</taxon>
        <taxon>eudicotyledons</taxon>
        <taxon>Gunneridae</taxon>
        <taxon>Pentapetalae</taxon>
        <taxon>rosids</taxon>
        <taxon>malvids</taxon>
        <taxon>Brassicales</taxon>
        <taxon>Brassicaceae</taxon>
        <taxon>Camelineae</taxon>
        <taxon>Arabidopsis</taxon>
    </lineage>
</organism>
<keyword id="KW-0002">3D-structure</keyword>
<keyword id="KW-0137">Centromere</keyword>
<keyword id="KW-0156">Chromatin regulator</keyword>
<keyword id="KW-0158">Chromosome</keyword>
<keyword id="KW-0238">DNA-binding</keyword>
<keyword id="KW-0479">Metal-binding</keyword>
<keyword id="KW-0539">Nucleus</keyword>
<keyword id="KW-1185">Reference proteome</keyword>
<keyword id="KW-0862">Zinc</keyword>